<accession>O00268</accession>
<accession>A6NGD9</accession>
<accession>Q5TBP6</accession>
<accession>Q99721</accession>
<accession>Q9BR40</accession>
<accession>Q9BX42</accession>
<reference key="1">
    <citation type="journal article" date="1997" name="Genes Dev.">
        <title>Human TAF(II)135 potentiates transcriptional activation by the AF-2s of the retinoic acid, vitamin D3, and thyroid hormone receptors in mammalian cells.</title>
        <authorList>
            <person name="Mengus G."/>
            <person name="May M."/>
            <person name="Carre L."/>
            <person name="Chambon P."/>
            <person name="Davidson I."/>
        </authorList>
    </citation>
    <scope>NUCLEOTIDE SEQUENCE [MRNA]</scope>
    <scope>FUNCTION</scope>
</reference>
<reference key="2">
    <citation type="submission" date="2004-05" db="EMBL/GenBank/DDBJ databases">
        <authorList>
            <consortium name="NIEHS SNPs program"/>
        </authorList>
    </citation>
    <scope>NUCLEOTIDE SEQUENCE [GENOMIC DNA]</scope>
</reference>
<reference key="3">
    <citation type="journal article" date="2001" name="Nature">
        <title>The DNA sequence and comparative analysis of human chromosome 20.</title>
        <authorList>
            <person name="Deloukas P."/>
            <person name="Matthews L.H."/>
            <person name="Ashurst J.L."/>
            <person name="Burton J."/>
            <person name="Gilbert J.G.R."/>
            <person name="Jones M."/>
            <person name="Stavrides G."/>
            <person name="Almeida J.P."/>
            <person name="Babbage A.K."/>
            <person name="Bagguley C.L."/>
            <person name="Bailey J."/>
            <person name="Barlow K.F."/>
            <person name="Bates K.N."/>
            <person name="Beard L.M."/>
            <person name="Beare D.M."/>
            <person name="Beasley O.P."/>
            <person name="Bird C.P."/>
            <person name="Blakey S.E."/>
            <person name="Bridgeman A.M."/>
            <person name="Brown A.J."/>
            <person name="Buck D."/>
            <person name="Burrill W.D."/>
            <person name="Butler A.P."/>
            <person name="Carder C."/>
            <person name="Carter N.P."/>
            <person name="Chapman J.C."/>
            <person name="Clamp M."/>
            <person name="Clark G."/>
            <person name="Clark L.N."/>
            <person name="Clark S.Y."/>
            <person name="Clee C.M."/>
            <person name="Clegg S."/>
            <person name="Cobley V.E."/>
            <person name="Collier R.E."/>
            <person name="Connor R.E."/>
            <person name="Corby N.R."/>
            <person name="Coulson A."/>
            <person name="Coville G.J."/>
            <person name="Deadman R."/>
            <person name="Dhami P.D."/>
            <person name="Dunn M."/>
            <person name="Ellington A.G."/>
            <person name="Frankland J.A."/>
            <person name="Fraser A."/>
            <person name="French L."/>
            <person name="Garner P."/>
            <person name="Grafham D.V."/>
            <person name="Griffiths C."/>
            <person name="Griffiths M.N.D."/>
            <person name="Gwilliam R."/>
            <person name="Hall R.E."/>
            <person name="Hammond S."/>
            <person name="Harley J.L."/>
            <person name="Heath P.D."/>
            <person name="Ho S."/>
            <person name="Holden J.L."/>
            <person name="Howden P.J."/>
            <person name="Huckle E."/>
            <person name="Hunt A.R."/>
            <person name="Hunt S.E."/>
            <person name="Jekosch K."/>
            <person name="Johnson C.M."/>
            <person name="Johnson D."/>
            <person name="Kay M.P."/>
            <person name="Kimberley A.M."/>
            <person name="King A."/>
            <person name="Knights A."/>
            <person name="Laird G.K."/>
            <person name="Lawlor S."/>
            <person name="Lehvaeslaiho M.H."/>
            <person name="Leversha M.A."/>
            <person name="Lloyd C."/>
            <person name="Lloyd D.M."/>
            <person name="Lovell J.D."/>
            <person name="Marsh V.L."/>
            <person name="Martin S.L."/>
            <person name="McConnachie L.J."/>
            <person name="McLay K."/>
            <person name="McMurray A.A."/>
            <person name="Milne S.A."/>
            <person name="Mistry D."/>
            <person name="Moore M.J.F."/>
            <person name="Mullikin J.C."/>
            <person name="Nickerson T."/>
            <person name="Oliver K."/>
            <person name="Parker A."/>
            <person name="Patel R."/>
            <person name="Pearce T.A.V."/>
            <person name="Peck A.I."/>
            <person name="Phillimore B.J.C.T."/>
            <person name="Prathalingam S.R."/>
            <person name="Plumb R.W."/>
            <person name="Ramsay H."/>
            <person name="Rice C.M."/>
            <person name="Ross M.T."/>
            <person name="Scott C.E."/>
            <person name="Sehra H.K."/>
            <person name="Shownkeen R."/>
            <person name="Sims S."/>
            <person name="Skuce C.D."/>
            <person name="Smith M.L."/>
            <person name="Soderlund C."/>
            <person name="Steward C.A."/>
            <person name="Sulston J.E."/>
            <person name="Swann R.M."/>
            <person name="Sycamore N."/>
            <person name="Taylor R."/>
            <person name="Tee L."/>
            <person name="Thomas D.W."/>
            <person name="Thorpe A."/>
            <person name="Tracey A."/>
            <person name="Tromans A.C."/>
            <person name="Vaudin M."/>
            <person name="Wall M."/>
            <person name="Wallis J.M."/>
            <person name="Whitehead S.L."/>
            <person name="Whittaker P."/>
            <person name="Willey D.L."/>
            <person name="Williams L."/>
            <person name="Williams S.A."/>
            <person name="Wilming L."/>
            <person name="Wray P.W."/>
            <person name="Hubbard T."/>
            <person name="Durbin R.M."/>
            <person name="Bentley D.R."/>
            <person name="Beck S."/>
            <person name="Rogers J."/>
        </authorList>
    </citation>
    <scope>NUCLEOTIDE SEQUENCE [LARGE SCALE GENOMIC DNA]</scope>
</reference>
<reference key="4">
    <citation type="submission" date="2005-09" db="EMBL/GenBank/DDBJ databases">
        <authorList>
            <person name="Mural R.J."/>
            <person name="Istrail S."/>
            <person name="Sutton G.G."/>
            <person name="Florea L."/>
            <person name="Halpern A.L."/>
            <person name="Mobarry C.M."/>
            <person name="Lippert R."/>
            <person name="Walenz B."/>
            <person name="Shatkay H."/>
            <person name="Dew I."/>
            <person name="Miller J.R."/>
            <person name="Flanigan M.J."/>
            <person name="Edwards N.J."/>
            <person name="Bolanos R."/>
            <person name="Fasulo D."/>
            <person name="Halldorsson B.V."/>
            <person name="Hannenhalli S."/>
            <person name="Turner R."/>
            <person name="Yooseph S."/>
            <person name="Lu F."/>
            <person name="Nusskern D.R."/>
            <person name="Shue B.C."/>
            <person name="Zheng X.H."/>
            <person name="Zhong F."/>
            <person name="Delcher A.L."/>
            <person name="Huson D.H."/>
            <person name="Kravitz S.A."/>
            <person name="Mouchard L."/>
            <person name="Reinert K."/>
            <person name="Remington K.A."/>
            <person name="Clark A.G."/>
            <person name="Waterman M.S."/>
            <person name="Eichler E.E."/>
            <person name="Adams M.D."/>
            <person name="Hunkapiller M.W."/>
            <person name="Myers E.W."/>
            <person name="Venter J.C."/>
        </authorList>
    </citation>
    <scope>NUCLEOTIDE SEQUENCE [LARGE SCALE GENOMIC DNA]</scope>
</reference>
<reference key="5">
    <citation type="journal article" date="1996" name="Proc. Natl. Acad. Sci. U.S.A.">
        <title>Molecular cloning and analysis of two subunits of the human TFIID complex: hTAFII130 and hTAFII100.</title>
        <authorList>
            <person name="Tanese N."/>
            <person name="Saluja D."/>
            <person name="Vassallo M.F."/>
            <person name="Chen J.-L."/>
            <person name="Admon A."/>
        </authorList>
    </citation>
    <scope>NUCLEOTIDE SEQUENCE [MRNA] OF 105-1085</scope>
    <scope>PARTIAL PROTEIN SEQUENCE</scope>
    <scope>FUNCTION</scope>
</reference>
<reference key="6">
    <citation type="journal article" date="1996" name="Genes Dev.">
        <title>TAF-like function of SV40 large T antigen.</title>
        <authorList>
            <person name="Damania B."/>
            <person name="Alwine J.C."/>
        </authorList>
    </citation>
    <scope>INTERACTION WITH SV40 LARGE T ANTIGEN (MICROBIAL INFECTION)</scope>
</reference>
<reference key="7">
    <citation type="journal article" date="1999" name="J. Biol. Chem.">
        <title>Identification of TATA-binding protein-free TAFII-containing complex subunits suggests a role in nucleosome acetylation and signal transduction.</title>
        <authorList>
            <person name="Brand M."/>
            <person name="Yamamoto K."/>
            <person name="Staub A."/>
            <person name="Tora L."/>
        </authorList>
    </citation>
    <scope>IDENTIFICATION IN THE TFTC-HAT COMPLEX WITH TAF5L; TAF6L; TADA3L; SUPT3H; TAF2; TAF5; TRRAP; TAF12; GCN5L2 AND TAF10</scope>
</reference>
<reference key="8">
    <citation type="journal article" date="2003" name="Proteomics">
        <title>Novel subunits of the TATA binding protein free TAFII-containing transcription complex identified by matrix-assisted laser desorption/ionization-time of flight mass spectrometry following one-dimensional gel electrophoresis.</title>
        <authorList>
            <person name="Cavusoglu N."/>
            <person name="Brand M."/>
            <person name="Tora L."/>
            <person name="van Dorsselaer A."/>
        </authorList>
    </citation>
    <scope>IDENTIFICATION IN THE TFTC-HAT COMPLEX</scope>
    <scope>IDENTIFICATION BY MASS SPECTROMETRY</scope>
</reference>
<reference key="9">
    <citation type="journal article" date="2005" name="Cell">
        <title>Physical association and coordinate function of the H3 K4 methyltransferase MLL1 and the H4 K16 acetyltransferase MOF.</title>
        <authorList>
            <person name="Dou Y."/>
            <person name="Milne T.A."/>
            <person name="Tackett A.J."/>
            <person name="Smith E.R."/>
            <person name="Fukuda A."/>
            <person name="Wysocka J."/>
            <person name="Allis C.D."/>
            <person name="Chait B.T."/>
            <person name="Hess J.L."/>
            <person name="Roeder R.G."/>
        </authorList>
    </citation>
    <scope>IDENTIFICATION IN THE MLL1/MLL COMPLEX</scope>
</reference>
<reference key="10">
    <citation type="journal article" date="2005" name="Oncogene">
        <title>A functional interaction between ATF7 and TAF12 that is modulated by TAF4.</title>
        <authorList>
            <person name="Hamard P.J."/>
            <person name="Dalbies-Tran R."/>
            <person name="Hauss C."/>
            <person name="Davidson I."/>
            <person name="Kedinger C."/>
            <person name="Chatton B."/>
        </authorList>
    </citation>
    <scope>INTERACTION WITH ATF7</scope>
</reference>
<reference key="11">
    <citation type="journal article" date="2009" name="Sci. Signal.">
        <title>Quantitative phosphoproteomic analysis of T cell receptor signaling reveals system-wide modulation of protein-protein interactions.</title>
        <authorList>
            <person name="Mayya V."/>
            <person name="Lundgren D.H."/>
            <person name="Hwang S.-I."/>
            <person name="Rezaul K."/>
            <person name="Wu L."/>
            <person name="Eng J.K."/>
            <person name="Rodionov V."/>
            <person name="Han D.K."/>
        </authorList>
    </citation>
    <scope>IDENTIFICATION BY MASS SPECTROMETRY [LARGE SCALE ANALYSIS]</scope>
    <source>
        <tissue>Leukemic T-cell</tissue>
    </source>
</reference>
<reference key="12">
    <citation type="journal article" date="2013" name="J. Proteome Res.">
        <title>Toward a comprehensive characterization of a human cancer cell phosphoproteome.</title>
        <authorList>
            <person name="Zhou H."/>
            <person name="Di Palma S."/>
            <person name="Preisinger C."/>
            <person name="Peng M."/>
            <person name="Polat A.N."/>
            <person name="Heck A.J."/>
            <person name="Mohammed S."/>
        </authorList>
    </citation>
    <scope>PHOSPHORYLATION [LARGE SCALE ANALYSIS] AT SER-109</scope>
    <scope>IDENTIFICATION BY MASS SPECTROMETRY [LARGE SCALE ANALYSIS]</scope>
    <source>
        <tissue>Cervix carcinoma</tissue>
        <tissue>Erythroleukemia</tissue>
    </source>
</reference>
<reference key="13">
    <citation type="journal article" date="2014" name="Mol. Cell. Proteomics">
        <title>Immunoaffinity enrichment and mass spectrometry analysis of protein methylation.</title>
        <authorList>
            <person name="Guo A."/>
            <person name="Gu H."/>
            <person name="Zhou J."/>
            <person name="Mulhern D."/>
            <person name="Wang Y."/>
            <person name="Lee K.A."/>
            <person name="Yang V."/>
            <person name="Aguiar M."/>
            <person name="Kornhauser J."/>
            <person name="Jia X."/>
            <person name="Ren J."/>
            <person name="Beausoleil S.A."/>
            <person name="Silva J.C."/>
            <person name="Vemulapalli V."/>
            <person name="Bedford M.T."/>
            <person name="Comb M.J."/>
        </authorList>
    </citation>
    <scope>METHYLATION [LARGE SCALE ANALYSIS] AT ARG-424 AND ARG-435</scope>
    <scope>IDENTIFICATION BY MASS SPECTROMETRY [LARGE SCALE ANALYSIS]</scope>
    <source>
        <tissue>Colon carcinoma</tissue>
    </source>
</reference>
<reference key="14">
    <citation type="journal article" date="2021" name="Genet. Med.">
        <title>Combining exome/genome sequencing with data repository analysis reveals novel gene-disease associations for a wide range of genetic disorders.</title>
        <authorList>
            <person name="Bertoli-Avella A.M."/>
            <person name="Kandaswamy K.K."/>
            <person name="Khan S."/>
            <person name="Ordonez-Herrera N."/>
            <person name="Tripolszki K."/>
            <person name="Beetz C."/>
            <person name="Rocha M.E."/>
            <person name="Urzi A."/>
            <person name="Hotakainen R."/>
            <person name="Leubauer A."/>
            <person name="Al-Ali R."/>
            <person name="Karageorgou V."/>
            <person name="Moldovan O."/>
            <person name="Dias P."/>
            <person name="Alhashem A."/>
            <person name="Tabarki B."/>
            <person name="Albalwi M.A."/>
            <person name="Alswaid A.F."/>
            <person name="Al-Hassnan Z.N."/>
            <person name="Alghamdi M.A."/>
            <person name="Hadipour Z."/>
            <person name="Hadipour F."/>
            <person name="Al Hashmi N."/>
            <person name="Al-Gazali L."/>
            <person name="Cheema H."/>
            <person name="Zaki M.S."/>
            <person name="Huening I."/>
            <person name="Alfares A."/>
            <person name="Eyaid W."/>
            <person name="Al Mutairi F."/>
            <person name="Alfadhel M."/>
            <person name="Alkuraya F.S."/>
            <person name="Al-Sannaa N.A."/>
            <person name="AlShamsi A.M."/>
            <person name="Ameziane N."/>
            <person name="Rolfs A."/>
            <person name="Bauer P."/>
        </authorList>
    </citation>
    <scope>INVOLVEMENT IN MRD73</scope>
    <scope>VARIANT MRD73 949-GLN--LYS-1085 DEL</scope>
</reference>
<reference key="15">
    <citation type="journal article" date="2000" name="Mol. Cell. Biol.">
        <title>The human TFIID components TAF(II)135 and TAF(II)20 and the yeast SAGA components ADA1 and TAF(II)68 heterodimerize to form histone-like pairs.</title>
        <authorList>
            <person name="Gangloff Y.-G."/>
            <person name="Werten S."/>
            <person name="Romier C."/>
            <person name="Carre L."/>
            <person name="Poch O."/>
            <person name="Moras D."/>
            <person name="Davidson I."/>
        </authorList>
    </citation>
    <scope>X-RAY CRYSTALLOGRAPHY (2.3 ANGSTROMS) OF 872-920 IN COMPLEX WITH TAF12</scope>
    <scope>FUNCTION</scope>
</reference>
<reference evidence="15" key="16">
    <citation type="journal article" date="2007" name="Proc. Natl. Acad. Sci. U.S.A.">
        <title>Conserved region I of human coactivator TAF4 binds to a short hydrophobic motif present in transcriptional regulators.</title>
        <authorList>
            <person name="Wang X."/>
            <person name="Truckses D.M."/>
            <person name="Takada S."/>
            <person name="Matsumura T."/>
            <person name="Tanese N."/>
            <person name="Jacobson R.H."/>
        </authorList>
    </citation>
    <scope>X-RAY CRYSTALLOGRAPHY (2.00 ANGSTROMS) OF 575-688</scope>
    <scope>METHYLATION AT LYS-594; LYS-595; LYS-597; LYS-605; LYS-611; LYS-621; LYS-631 AND LYS-658</scope>
</reference>
<reference evidence="16 17 18 19 20 21 22 23 24 25" key="17">
    <citation type="journal article" date="2021" name="Science">
        <title>Structural insights into preinitiation complex assembly on core promoters.</title>
        <authorList>
            <person name="Chen X."/>
            <person name="Qi Y."/>
            <person name="Wu Z."/>
            <person name="Wang X."/>
            <person name="Li J."/>
            <person name="Zhao D."/>
            <person name="Hou H."/>
            <person name="Li Y."/>
            <person name="Yu Z."/>
            <person name="Liu W."/>
            <person name="Wang M."/>
            <person name="Ren Y."/>
            <person name="Li Z."/>
            <person name="Yang H."/>
            <person name="Xu Y."/>
        </authorList>
    </citation>
    <scope>STRUCTURE BY ELECTRON MICROSCOPY (2.77 ANGSTROMS)</scope>
    <scope>FUNCTION</scope>
    <scope>IDENTIFICATION IN THE TFIID COMPLEX</scope>
    <scope>SUBUNIT</scope>
</reference>
<reference key="18">
    <citation type="journal article" date="2022" name="Hum. Mutat.">
        <title>De novo putative loss-of-function variants in TAF4 are associated with a neuro-developmental disorder.</title>
        <authorList>
            <person name="Janssen B.D.E."/>
            <person name="van den Boogaard M.H."/>
            <person name="Lichtenbelt K."/>
            <person name="Seaby E.G."/>
            <person name="Stals K."/>
            <person name="Ellard S."/>
            <person name="Newbury-Ecob R."/>
            <person name="Dixit A."/>
            <person name="Roht L."/>
            <person name="Pajusalu S."/>
            <person name="Ounap K."/>
            <person name="Firth H.V."/>
            <person name="Buckley M."/>
            <person name="Wilson M."/>
            <person name="Roscioli T."/>
            <person name="Tidwell T."/>
            <person name="Mao R."/>
            <person name="Ennis S."/>
            <person name="Holwerda S.J."/>
            <person name="van Gassen K."/>
            <person name="van Jaarsveld R.H."/>
        </authorList>
    </citation>
    <scope>VARIANTS MRD73 450-GLN--LYS-1085 DEL; 677-GLN--LYS-1085 DEL AND 729-GLN--LYS-1085 DEL</scope>
</reference>
<comment type="function">
    <text evidence="4 8 12 13">The TFIID basal transcription factor complex plays a major role in the initiation of RNA polymerase II (Pol II)-dependent transcription (PubMed:33795473). TFIID recognizes and binds promoters with or without a TATA box via its subunit TBP, a TATA-box-binding protein, and promotes assembly of the pre-initiation complex (PIC) (PubMed:33795473). The TFIID complex consists of TBP and TBP-associated factors (TAFs), including TAF1, TAF2, TAF3, TAF4, TAF5, TAF6, TAF7, TAF8, TAF9, TAF10, TAF11, TAF12 and TAF13 (PubMed:10594036, PubMed:33795473, PubMed:8942982). TAF4 may maintain an association between the TFIID and TFIIA complexes, while bound to the promoter, together with TBP, during PIC assembly (PubMed:33795473). Potentiates transcriptional activation by the AF-2S of the retinoic acid, vitamin D3 and thyroid hormone (PubMed:9192867).</text>
</comment>
<comment type="subunit">
    <text evidence="3 4 5 6 7 8">Component of the TFIID basal transcription factor complex, composed of TATA-box-binding protein TBP, and a number of TBP-associated factors (TAFs), including TAF1, TAF2, TAF3, TAF4, TAF5, TAF6, TAF7, TAF8, TAF9, TAF10, TAF11, TAF12 and TAF13 (PubMed:10594036, PubMed:33795473). Component of the TFTC-HAT complex, at least composed of TAF5L, TAF6L, TADA3L, SUPT3H, TAF2, TAF4, TAF5, GCN5L2/GCN5, TAF10, TAF12 and TRRAP (PubMed:10373431, PubMed:12601814). Component of some MLL1/MLL complex, at least composed of the core components KMT2A/MLL1, ASH2L, HCFC1/HCF1, WDR5 and RBBP5, as well as the facultative components BACC1, CHD8, E2F6, HSP70, INO80C, KANSL1, LAS1L, MAX, MCRS1, MGA, MYST1/MOF, PELP1, PHF20, PRP31, RING2, RUVB1/TIP49A, RUVB2/TIP49B, SENP3, TAF1, TAF4, TAF6, TAF7, TAF9 and TEX10 (PubMed:15960975). Interacts with ATF7; the interaction inhibits ATF7-mediated tranactivation (PubMed:15735663).</text>
</comment>
<comment type="subunit">
    <text evidence="11">(Microbial infection) Interacts with SV40 Large T antigen.</text>
</comment>
<comment type="interaction">
    <interactant intactId="EBI-1034261">
        <id>O00268</id>
    </interactant>
    <interactant intactId="EBI-625002">
        <id>O43889</id>
        <label>CREB3</label>
    </interactant>
    <organismsDiffer>false</organismsDiffer>
    <experiments>2</experiments>
</comment>
<comment type="interaction">
    <interactant intactId="EBI-1034261">
        <id>O00268</id>
    </interactant>
    <interactant intactId="EBI-632965">
        <id>Q9NS37</id>
        <label>CREBZF</label>
    </interactant>
    <organismsDiffer>false</organismsDiffer>
    <experiments>2</experiments>
</comment>
<comment type="interaction">
    <interactant intactId="EBI-1034261">
        <id>O00268</id>
    </interactant>
    <interactant intactId="EBI-1034238">
        <id>Q16514</id>
        <label>TAF12</label>
    </interactant>
    <organismsDiffer>false</organismsDiffer>
    <experiments>4</experiments>
</comment>
<comment type="interaction">
    <interactant intactId="EBI-1034261">
        <id>O00268</id>
    </interactant>
    <interactant intactId="EBI-1034253">
        <id>Q16514-1</id>
        <label>TAF12</label>
    </interactant>
    <organismsDiffer>false</organismsDiffer>
    <experiments>16</experiments>
</comment>
<comment type="subcellular location">
    <subcellularLocation>
        <location>Nucleus</location>
    </subcellularLocation>
</comment>
<comment type="disease" evidence="9 10">
    <disease id="DI-06716">
        <name>Intellectual developmental disorder, autosomal dominant 73</name>
        <acronym>MRD73</acronym>
        <description>An autosomal dominant disorder characterized by intellectual disability ranging from mild to severe, developmental delay, speech delay, behavioral abnormalities, and non-specific dysmorphic facial features.</description>
        <dbReference type="MIM" id="620450"/>
    </disease>
    <text>The disease is caused by variants affecting the gene represented in this entry.</text>
</comment>
<comment type="similarity">
    <text evidence="14">Belongs to the TAF4 family.</text>
</comment>
<keyword id="KW-0002">3D-structure</keyword>
<keyword id="KW-0903">Direct protein sequencing</keyword>
<keyword id="KW-0225">Disease variant</keyword>
<keyword id="KW-0945">Host-virus interaction</keyword>
<keyword id="KW-0991">Intellectual disability</keyword>
<keyword id="KW-0488">Methylation</keyword>
<keyword id="KW-0539">Nucleus</keyword>
<keyword id="KW-0597">Phosphoprotein</keyword>
<keyword id="KW-1267">Proteomics identification</keyword>
<keyword id="KW-1185">Reference proteome</keyword>
<keyword id="KW-0804">Transcription</keyword>
<keyword id="KW-0805">Transcription regulation</keyword>
<feature type="chain" id="PRO_0000118869" description="Transcription initiation factor TFIID subunit 4">
    <location>
        <begin position="1"/>
        <end position="1085"/>
    </location>
</feature>
<feature type="domain" description="TAFH" evidence="1">
    <location>
        <begin position="590"/>
        <end position="687"/>
    </location>
</feature>
<feature type="region of interest" description="Disordered" evidence="2">
    <location>
        <begin position="66"/>
        <end position="204"/>
    </location>
</feature>
<feature type="region of interest" description="Disordered" evidence="2">
    <location>
        <begin position="243"/>
        <end position="341"/>
    </location>
</feature>
<feature type="region of interest" description="Disordered" evidence="2">
    <location>
        <begin position="383"/>
        <end position="425"/>
    </location>
</feature>
<feature type="region of interest" description="Disordered" evidence="2">
    <location>
        <begin position="479"/>
        <end position="499"/>
    </location>
</feature>
<feature type="region of interest" description="Disordered" evidence="2">
    <location>
        <begin position="566"/>
        <end position="586"/>
    </location>
</feature>
<feature type="region of interest" description="Minimal region required to interact with TAF12" evidence="4">
    <location>
        <begin position="870"/>
        <end position="913"/>
    </location>
</feature>
<feature type="region of interest" description="Disordered" evidence="2">
    <location>
        <begin position="1015"/>
        <end position="1049"/>
    </location>
</feature>
<feature type="compositionally biased region" description="Low complexity" evidence="2">
    <location>
        <begin position="66"/>
        <end position="85"/>
    </location>
</feature>
<feature type="compositionally biased region" description="Pro residues" evidence="2">
    <location>
        <begin position="104"/>
        <end position="131"/>
    </location>
</feature>
<feature type="compositionally biased region" description="Low complexity" evidence="2">
    <location>
        <begin position="132"/>
        <end position="150"/>
    </location>
</feature>
<feature type="compositionally biased region" description="Low complexity" evidence="2">
    <location>
        <begin position="158"/>
        <end position="171"/>
    </location>
</feature>
<feature type="compositionally biased region" description="Pro residues" evidence="2">
    <location>
        <begin position="173"/>
        <end position="189"/>
    </location>
</feature>
<feature type="compositionally biased region" description="Low complexity" evidence="2">
    <location>
        <begin position="191"/>
        <end position="204"/>
    </location>
</feature>
<feature type="compositionally biased region" description="Pro residues" evidence="2">
    <location>
        <begin position="249"/>
        <end position="277"/>
    </location>
</feature>
<feature type="compositionally biased region" description="Pro residues" evidence="2">
    <location>
        <begin position="284"/>
        <end position="301"/>
    </location>
</feature>
<feature type="compositionally biased region" description="Low complexity" evidence="2">
    <location>
        <begin position="302"/>
        <end position="320"/>
    </location>
</feature>
<feature type="compositionally biased region" description="Gly residues" evidence="2">
    <location>
        <begin position="321"/>
        <end position="330"/>
    </location>
</feature>
<feature type="compositionally biased region" description="Low complexity" evidence="2">
    <location>
        <begin position="331"/>
        <end position="341"/>
    </location>
</feature>
<feature type="compositionally biased region" description="Low complexity" evidence="2">
    <location>
        <begin position="396"/>
        <end position="407"/>
    </location>
</feature>
<feature type="compositionally biased region" description="Polar residues" evidence="2">
    <location>
        <begin position="408"/>
        <end position="425"/>
    </location>
</feature>
<feature type="compositionally biased region" description="Gly residues" evidence="2">
    <location>
        <begin position="1025"/>
        <end position="1034"/>
    </location>
</feature>
<feature type="compositionally biased region" description="Low complexity" evidence="2">
    <location>
        <begin position="1035"/>
        <end position="1047"/>
    </location>
</feature>
<feature type="modified residue" description="Phosphoserine" evidence="26">
    <location>
        <position position="109"/>
    </location>
</feature>
<feature type="modified residue" description="Asymmetric dimethylarginine" evidence="27">
    <location>
        <position position="424"/>
    </location>
</feature>
<feature type="modified residue" description="Asymmetric dimethylarginine" evidence="27">
    <location>
        <position position="435"/>
    </location>
</feature>
<feature type="modified residue" description="N6,N6-dimethyllysine" evidence="15">
    <location>
        <position position="594"/>
    </location>
</feature>
<feature type="modified residue" description="N6,N6-dimethyllysine" evidence="15">
    <location>
        <position position="595"/>
    </location>
</feature>
<feature type="modified residue" description="N6,N6-dimethyllysine" evidence="15">
    <location>
        <position position="597"/>
    </location>
</feature>
<feature type="modified residue" description="N6,N6-dimethyllysine" evidence="15">
    <location>
        <position position="605"/>
    </location>
</feature>
<feature type="modified residue" description="N6,N6-dimethyllysine" evidence="15">
    <location>
        <position position="611"/>
    </location>
</feature>
<feature type="modified residue" description="N6,N6-dimethyllysine" evidence="15">
    <location>
        <position position="621"/>
    </location>
</feature>
<feature type="modified residue" description="N6,N6-dimethyllysine" evidence="15">
    <location>
        <position position="631"/>
    </location>
</feature>
<feature type="modified residue" description="N6,N6-dimethyllysine" evidence="15">
    <location>
        <position position="658"/>
    </location>
</feature>
<feature type="sequence variant" id="VAR_088796" description="In MRD73; likely pathogenic." evidence="10">
    <location>
        <begin position="450"/>
        <end position="1085"/>
    </location>
</feature>
<feature type="sequence variant" id="VAR_052258" description="In dbSNP:rs6089604.">
    <original>P</original>
    <variation>L</variation>
    <location>
        <position position="651"/>
    </location>
</feature>
<feature type="sequence variant" id="VAR_088797" description="In MRD73; likely pathogenic." evidence="10">
    <location>
        <begin position="677"/>
        <end position="1085"/>
    </location>
</feature>
<feature type="sequence variant" id="VAR_088798" description="In MRD73; likely pathogenic." evidence="10">
    <location>
        <begin position="729"/>
        <end position="1085"/>
    </location>
</feature>
<feature type="sequence variant" id="VAR_088799" description="In MRD73; likely pathogenic." evidence="9">
    <location>
        <begin position="949"/>
        <end position="1085"/>
    </location>
</feature>
<feature type="sequence conflict" description="In Ref. 5; AAC50901." evidence="14" ref="5">
    <original>PGPPSPRRPLVPA</original>
    <variation>GRGLLQQRGGRES</variation>
    <location>
        <begin position="105"/>
        <end position="117"/>
    </location>
</feature>
<feature type="sequence conflict" description="In Ref. 1; CAA72189 and 5; AAC50901." evidence="14" ref="1 5">
    <original>S</original>
    <variation>A</variation>
    <location>
        <position position="136"/>
    </location>
</feature>
<feature type="sequence conflict" description="In Ref. 1; CAA72189 and 5; AAC50901." evidence="14" ref="1 5">
    <location>
        <begin position="186"/>
        <end position="187"/>
    </location>
</feature>
<feature type="sequence conflict" description="In Ref. 5; AAC50901." evidence="14" ref="5">
    <location>
        <begin position="235"/>
        <end position="266"/>
    </location>
</feature>
<feature type="sequence conflict" description="In Ref. 5; AAC50901." evidence="14" ref="5">
    <original>P</original>
    <variation>L</variation>
    <location>
        <position position="295"/>
    </location>
</feature>
<feature type="helix" evidence="29">
    <location>
        <begin position="585"/>
        <end position="593"/>
    </location>
</feature>
<feature type="helix" evidence="29">
    <location>
        <begin position="599"/>
        <end position="604"/>
    </location>
</feature>
<feature type="helix" evidence="29">
    <location>
        <begin position="614"/>
        <end position="620"/>
    </location>
</feature>
<feature type="helix" evidence="29">
    <location>
        <begin position="623"/>
        <end position="628"/>
    </location>
</feature>
<feature type="helix" evidence="29">
    <location>
        <begin position="634"/>
        <end position="644"/>
    </location>
</feature>
<feature type="helix" evidence="29">
    <location>
        <begin position="653"/>
        <end position="657"/>
    </location>
</feature>
<feature type="helix" evidence="29">
    <location>
        <begin position="661"/>
        <end position="666"/>
    </location>
</feature>
<feature type="helix" evidence="29">
    <location>
        <begin position="671"/>
        <end position="677"/>
    </location>
</feature>
<feature type="helix" evidence="31">
    <location>
        <begin position="843"/>
        <end position="856"/>
    </location>
</feature>
<feature type="helix" evidence="28">
    <location>
        <begin position="875"/>
        <end position="887"/>
    </location>
</feature>
<feature type="turn" evidence="28">
    <location>
        <begin position="888"/>
        <end position="890"/>
    </location>
</feature>
<feature type="helix" evidence="28">
    <location>
        <begin position="898"/>
        <end position="918"/>
    </location>
</feature>
<feature type="helix" evidence="30">
    <location>
        <begin position="923"/>
        <end position="925"/>
    </location>
</feature>
<feature type="turn" evidence="31">
    <location>
        <begin position="928"/>
        <end position="930"/>
    </location>
</feature>
<feature type="strand" evidence="31">
    <location>
        <begin position="932"/>
        <end position="936"/>
    </location>
</feature>
<feature type="helix" evidence="31">
    <location>
        <begin position="940"/>
        <end position="969"/>
    </location>
</feature>
<feature type="strand" evidence="31">
    <location>
        <begin position="1056"/>
        <end position="1058"/>
    </location>
</feature>
<feature type="helix" evidence="31">
    <location>
        <begin position="1060"/>
        <end position="1065"/>
    </location>
</feature>
<feature type="strand" evidence="31">
    <location>
        <begin position="1068"/>
        <end position="1071"/>
    </location>
</feature>
<feature type="strand" evidence="31">
    <location>
        <begin position="1074"/>
        <end position="1076"/>
    </location>
</feature>
<feature type="helix" evidence="31">
    <location>
        <begin position="1077"/>
        <end position="1082"/>
    </location>
</feature>
<dbReference type="EMBL" id="Y11354">
    <property type="protein sequence ID" value="CAA72189.1"/>
    <property type="molecule type" value="mRNA"/>
</dbReference>
<dbReference type="EMBL" id="AY623115">
    <property type="protein sequence ID" value="AAT38111.1"/>
    <property type="molecule type" value="Genomic_DNA"/>
</dbReference>
<dbReference type="EMBL" id="AL109911">
    <property type="status" value="NOT_ANNOTATED_CDS"/>
    <property type="molecule type" value="Genomic_DNA"/>
</dbReference>
<dbReference type="EMBL" id="AL137077">
    <property type="status" value="NOT_ANNOTATED_CDS"/>
    <property type="molecule type" value="Genomic_DNA"/>
</dbReference>
<dbReference type="EMBL" id="CH471077">
    <property type="protein sequence ID" value="EAW75407.1"/>
    <property type="molecule type" value="Genomic_DNA"/>
</dbReference>
<dbReference type="EMBL" id="U75308">
    <property type="protein sequence ID" value="AAC50901.1"/>
    <property type="molecule type" value="mRNA"/>
</dbReference>
<dbReference type="CCDS" id="CCDS33500.1"/>
<dbReference type="RefSeq" id="NP_003176.2">
    <property type="nucleotide sequence ID" value="NM_003185.4"/>
</dbReference>
<dbReference type="PDB" id="1H3O">
    <property type="method" value="X-ray"/>
    <property type="resolution" value="2.30 A"/>
    <property type="chains" value="A/C=872-945"/>
</dbReference>
<dbReference type="PDB" id="2P6V">
    <property type="method" value="X-ray"/>
    <property type="resolution" value="2.00 A"/>
    <property type="chains" value="A=575-688"/>
</dbReference>
<dbReference type="PDB" id="6MZC">
    <property type="method" value="EM"/>
    <property type="resolution" value="4.50 A"/>
    <property type="chains" value="E=1-1085"/>
</dbReference>
<dbReference type="PDB" id="6MZD">
    <property type="method" value="EM"/>
    <property type="resolution" value="9.80 A"/>
    <property type="chains" value="D=1-1085"/>
</dbReference>
<dbReference type="PDB" id="6MZL">
    <property type="method" value="EM"/>
    <property type="resolution" value="23.00 A"/>
    <property type="chains" value="D/E=1-1085"/>
</dbReference>
<dbReference type="PDB" id="6MZM">
    <property type="method" value="EM"/>
    <property type="resolution" value="7.50 A"/>
    <property type="chains" value="D=61-1085"/>
</dbReference>
<dbReference type="PDB" id="7EDX">
    <property type="method" value="EM"/>
    <property type="resolution" value="4.50 A"/>
    <property type="chains" value="D/d=1-1085"/>
</dbReference>
<dbReference type="PDB" id="7EG7">
    <property type="method" value="EM"/>
    <property type="resolution" value="6.20 A"/>
    <property type="chains" value="D/d=1-1085"/>
</dbReference>
<dbReference type="PDB" id="7EG8">
    <property type="method" value="EM"/>
    <property type="resolution" value="7.40 A"/>
    <property type="chains" value="D/d=1-1085"/>
</dbReference>
<dbReference type="PDB" id="7EG9">
    <property type="method" value="EM"/>
    <property type="resolution" value="3.70 A"/>
    <property type="chains" value="D/d=1-1085"/>
</dbReference>
<dbReference type="PDB" id="7EGA">
    <property type="method" value="EM"/>
    <property type="resolution" value="4.10 A"/>
    <property type="chains" value="D/d=1-1085"/>
</dbReference>
<dbReference type="PDB" id="7EGB">
    <property type="method" value="EM"/>
    <property type="resolution" value="3.30 A"/>
    <property type="chains" value="D/d=1-1085"/>
</dbReference>
<dbReference type="PDB" id="7EGC">
    <property type="method" value="EM"/>
    <property type="resolution" value="3.90 A"/>
    <property type="chains" value="D/d=1-1085"/>
</dbReference>
<dbReference type="PDB" id="7EGD">
    <property type="method" value="EM"/>
    <property type="resolution" value="6.75 A"/>
    <property type="chains" value="D/d=1-1085"/>
</dbReference>
<dbReference type="PDB" id="7EGE">
    <property type="method" value="EM"/>
    <property type="resolution" value="9.00 A"/>
    <property type="chains" value="D/d=1-1085"/>
</dbReference>
<dbReference type="PDB" id="7EGF">
    <property type="method" value="EM"/>
    <property type="resolution" value="3.16 A"/>
    <property type="chains" value="d=1-1085"/>
</dbReference>
<dbReference type="PDB" id="7EGG">
    <property type="method" value="EM"/>
    <property type="resolution" value="2.77 A"/>
    <property type="chains" value="D=1-1085"/>
</dbReference>
<dbReference type="PDB" id="7EGI">
    <property type="method" value="EM"/>
    <property type="resolution" value="9.82 A"/>
    <property type="chains" value="D/d=1-1085"/>
</dbReference>
<dbReference type="PDB" id="7EGJ">
    <property type="method" value="EM"/>
    <property type="resolution" value="8.64 A"/>
    <property type="chains" value="D/d=1-1085"/>
</dbReference>
<dbReference type="PDB" id="7ENA">
    <property type="method" value="EM"/>
    <property type="resolution" value="4.07 A"/>
    <property type="chains" value="DD/Dd=1-1085"/>
</dbReference>
<dbReference type="PDB" id="7ENC">
    <property type="method" value="EM"/>
    <property type="resolution" value="4.13 A"/>
    <property type="chains" value="DD/Dd=1-1085"/>
</dbReference>
<dbReference type="PDB" id="8GXQ">
    <property type="method" value="EM"/>
    <property type="resolution" value="5.04 A"/>
    <property type="chains" value="DD/Dd=1-1085"/>
</dbReference>
<dbReference type="PDB" id="8GXS">
    <property type="method" value="EM"/>
    <property type="resolution" value="4.16 A"/>
    <property type="chains" value="DD/Dd=1-1085"/>
</dbReference>
<dbReference type="PDB" id="8WAK">
    <property type="method" value="EM"/>
    <property type="resolution" value="5.47 A"/>
    <property type="chains" value="D/d=1-1085"/>
</dbReference>
<dbReference type="PDB" id="8WAL">
    <property type="method" value="EM"/>
    <property type="resolution" value="8.52 A"/>
    <property type="chains" value="D/d=1-1085"/>
</dbReference>
<dbReference type="PDB" id="8WAN">
    <property type="method" value="EM"/>
    <property type="resolution" value="6.07 A"/>
    <property type="chains" value="D/d=1-1085"/>
</dbReference>
<dbReference type="PDB" id="8WAO">
    <property type="method" value="EM"/>
    <property type="resolution" value="6.40 A"/>
    <property type="chains" value="D/d=1-1085"/>
</dbReference>
<dbReference type="PDB" id="8WAP">
    <property type="method" value="EM"/>
    <property type="resolution" value="5.85 A"/>
    <property type="chains" value="D/d=1-1085"/>
</dbReference>
<dbReference type="PDB" id="8WAQ">
    <property type="method" value="EM"/>
    <property type="resolution" value="6.29 A"/>
    <property type="chains" value="D/d=1-1085"/>
</dbReference>
<dbReference type="PDB" id="8WAR">
    <property type="method" value="EM"/>
    <property type="resolution" value="7.20 A"/>
    <property type="chains" value="D/d=1-1085"/>
</dbReference>
<dbReference type="PDB" id="8WAS">
    <property type="method" value="EM"/>
    <property type="resolution" value="6.13 A"/>
    <property type="chains" value="D/d=1-1085"/>
</dbReference>
<dbReference type="PDBsum" id="1H3O"/>
<dbReference type="PDBsum" id="2P6V"/>
<dbReference type="PDBsum" id="6MZC"/>
<dbReference type="PDBsum" id="6MZD"/>
<dbReference type="PDBsum" id="6MZL"/>
<dbReference type="PDBsum" id="6MZM"/>
<dbReference type="PDBsum" id="7EDX"/>
<dbReference type="PDBsum" id="7EG7"/>
<dbReference type="PDBsum" id="7EG8"/>
<dbReference type="PDBsum" id="7EG9"/>
<dbReference type="PDBsum" id="7EGA"/>
<dbReference type="PDBsum" id="7EGB"/>
<dbReference type="PDBsum" id="7EGC"/>
<dbReference type="PDBsum" id="7EGD"/>
<dbReference type="PDBsum" id="7EGE"/>
<dbReference type="PDBsum" id="7EGF"/>
<dbReference type="PDBsum" id="7EGG"/>
<dbReference type="PDBsum" id="7EGI"/>
<dbReference type="PDBsum" id="7EGJ"/>
<dbReference type="PDBsum" id="7ENA"/>
<dbReference type="PDBsum" id="7ENC"/>
<dbReference type="PDBsum" id="8GXQ"/>
<dbReference type="PDBsum" id="8GXS"/>
<dbReference type="PDBsum" id="8WAK"/>
<dbReference type="PDBsum" id="8WAL"/>
<dbReference type="PDBsum" id="8WAN"/>
<dbReference type="PDBsum" id="8WAO"/>
<dbReference type="PDBsum" id="8WAP"/>
<dbReference type="PDBsum" id="8WAQ"/>
<dbReference type="PDBsum" id="8WAR"/>
<dbReference type="PDBsum" id="8WAS"/>
<dbReference type="EMDB" id="EMD-31075"/>
<dbReference type="EMDB" id="EMD-31107"/>
<dbReference type="EMDB" id="EMD-31108"/>
<dbReference type="EMDB" id="EMD-31109"/>
<dbReference type="EMDB" id="EMD-31110"/>
<dbReference type="EMDB" id="EMD-31111"/>
<dbReference type="EMDB" id="EMD-31112"/>
<dbReference type="EMDB" id="EMD-31113"/>
<dbReference type="EMDB" id="EMD-31114"/>
<dbReference type="EMDB" id="EMD-31115"/>
<dbReference type="EMDB" id="EMD-31116"/>
<dbReference type="EMDB" id="EMD-31118"/>
<dbReference type="EMDB" id="EMD-31119"/>
<dbReference type="EMDB" id="EMD-31204"/>
<dbReference type="EMDB" id="EMD-31207"/>
<dbReference type="EMDB" id="EMD-34359"/>
<dbReference type="EMDB" id="EMD-34360"/>
<dbReference type="EMDB" id="EMD-37395"/>
<dbReference type="EMDB" id="EMD-37396"/>
<dbReference type="EMDB" id="EMD-37398"/>
<dbReference type="EMDB" id="EMD-37399"/>
<dbReference type="EMDB" id="EMD-37400"/>
<dbReference type="EMDB" id="EMD-37401"/>
<dbReference type="EMDB" id="EMD-37402"/>
<dbReference type="EMDB" id="EMD-37403"/>
<dbReference type="EMDB" id="EMD-9298"/>
<dbReference type="EMDB" id="EMD-9302"/>
<dbReference type="EMDB" id="EMD-9305"/>
<dbReference type="EMDB" id="EMD-9306"/>
<dbReference type="SMR" id="O00268"/>
<dbReference type="BioGRID" id="112737">
    <property type="interactions" value="156"/>
</dbReference>
<dbReference type="ComplexPortal" id="CPX-903">
    <property type="entry name" value="TFTC histone acetylation complex"/>
</dbReference>
<dbReference type="ComplexPortal" id="CPX-915">
    <property type="entry name" value="General transcription factor complex TFIID"/>
</dbReference>
<dbReference type="CORUM" id="O00268"/>
<dbReference type="DIP" id="DIP-35350N"/>
<dbReference type="ELM" id="O00268"/>
<dbReference type="FunCoup" id="O00268">
    <property type="interactions" value="3736"/>
</dbReference>
<dbReference type="IntAct" id="O00268">
    <property type="interactions" value="64"/>
</dbReference>
<dbReference type="MINT" id="O00268"/>
<dbReference type="STRING" id="9606.ENSP00000252996"/>
<dbReference type="GlyConnect" id="2870">
    <property type="glycosylation" value="1 O-GlcNAc glycan (1 site)"/>
</dbReference>
<dbReference type="GlyCosmos" id="O00268">
    <property type="glycosylation" value="10 sites, 2 glycans"/>
</dbReference>
<dbReference type="GlyGen" id="O00268">
    <property type="glycosylation" value="24 sites, 2 O-linked glycans (22 sites)"/>
</dbReference>
<dbReference type="iPTMnet" id="O00268"/>
<dbReference type="PhosphoSitePlus" id="O00268"/>
<dbReference type="BioMuta" id="TAF4"/>
<dbReference type="jPOST" id="O00268"/>
<dbReference type="MassIVE" id="O00268"/>
<dbReference type="PaxDb" id="9606-ENSP00000252996"/>
<dbReference type="PeptideAtlas" id="O00268"/>
<dbReference type="ProteomicsDB" id="47818"/>
<dbReference type="Pumba" id="O00268"/>
<dbReference type="Antibodypedia" id="1785">
    <property type="antibodies" value="94 antibodies from 24 providers"/>
</dbReference>
<dbReference type="DNASU" id="6874"/>
<dbReference type="Ensembl" id="ENST00000252996.9">
    <property type="protein sequence ID" value="ENSP00000252996.3"/>
    <property type="gene ID" value="ENSG00000130699.20"/>
</dbReference>
<dbReference type="GeneID" id="6874"/>
<dbReference type="KEGG" id="hsa:6874"/>
<dbReference type="MANE-Select" id="ENST00000252996.9">
    <property type="protein sequence ID" value="ENSP00000252996.3"/>
    <property type="RefSeq nucleotide sequence ID" value="NM_003185.4"/>
    <property type="RefSeq protein sequence ID" value="NP_003176.2"/>
</dbReference>
<dbReference type="UCSC" id="uc002ybs.3">
    <property type="organism name" value="human"/>
</dbReference>
<dbReference type="AGR" id="HGNC:11537"/>
<dbReference type="CTD" id="6874"/>
<dbReference type="DisGeNET" id="6874"/>
<dbReference type="GeneCards" id="TAF4"/>
<dbReference type="HGNC" id="HGNC:11537">
    <property type="gene designation" value="TAF4"/>
</dbReference>
<dbReference type="HPA" id="ENSG00000130699">
    <property type="expression patterns" value="Low tissue specificity"/>
</dbReference>
<dbReference type="MalaCards" id="TAF4"/>
<dbReference type="MIM" id="601796">
    <property type="type" value="gene"/>
</dbReference>
<dbReference type="MIM" id="620450">
    <property type="type" value="phenotype"/>
</dbReference>
<dbReference type="neXtProt" id="NX_O00268"/>
<dbReference type="OpenTargets" id="ENSG00000130699"/>
<dbReference type="Orphanet" id="528084">
    <property type="disease" value="Non-specific syndromic intellectual disability"/>
</dbReference>
<dbReference type="PharmGKB" id="PA36312"/>
<dbReference type="VEuPathDB" id="HostDB:ENSG00000130699"/>
<dbReference type="eggNOG" id="KOG2341">
    <property type="taxonomic scope" value="Eukaryota"/>
</dbReference>
<dbReference type="GeneTree" id="ENSGT00390000011620"/>
<dbReference type="HOGENOM" id="CLU_010576_0_0_1"/>
<dbReference type="InParanoid" id="O00268"/>
<dbReference type="OMA" id="GQTMQGG"/>
<dbReference type="OrthoDB" id="21060at2759"/>
<dbReference type="PAN-GO" id="O00268">
    <property type="GO annotations" value="4 GO annotations based on evolutionary models"/>
</dbReference>
<dbReference type="PhylomeDB" id="O00268"/>
<dbReference type="TreeFam" id="TF316520"/>
<dbReference type="PathwayCommons" id="O00268"/>
<dbReference type="Reactome" id="R-HSA-167161">
    <property type="pathway name" value="HIV Transcription Initiation"/>
</dbReference>
<dbReference type="Reactome" id="R-HSA-167162">
    <property type="pathway name" value="RNA Polymerase II HIV Promoter Escape"/>
</dbReference>
<dbReference type="Reactome" id="R-HSA-167172">
    <property type="pathway name" value="Transcription of the HIV genome"/>
</dbReference>
<dbReference type="Reactome" id="R-HSA-674695">
    <property type="pathway name" value="RNA Polymerase II Pre-transcription Events"/>
</dbReference>
<dbReference type="Reactome" id="R-HSA-6804756">
    <property type="pathway name" value="Regulation of TP53 Activity through Phosphorylation"/>
</dbReference>
<dbReference type="Reactome" id="R-HSA-73776">
    <property type="pathway name" value="RNA Polymerase II Promoter Escape"/>
</dbReference>
<dbReference type="Reactome" id="R-HSA-73779">
    <property type="pathway name" value="RNA Polymerase II Transcription Pre-Initiation And Promoter Opening"/>
</dbReference>
<dbReference type="Reactome" id="R-HSA-75953">
    <property type="pathway name" value="RNA Polymerase II Transcription Initiation"/>
</dbReference>
<dbReference type="Reactome" id="R-HSA-76042">
    <property type="pathway name" value="RNA Polymerase II Transcription Initiation And Promoter Clearance"/>
</dbReference>
<dbReference type="SignaLink" id="O00268"/>
<dbReference type="SIGNOR" id="O00268"/>
<dbReference type="BioGRID-ORCS" id="6874">
    <property type="hits" value="143 hits in 1170 CRISPR screens"/>
</dbReference>
<dbReference type="ChiTaRS" id="TAF4">
    <property type="organism name" value="human"/>
</dbReference>
<dbReference type="EvolutionaryTrace" id="O00268"/>
<dbReference type="GeneWiki" id="TAF4"/>
<dbReference type="GenomeRNAi" id="6874"/>
<dbReference type="Pharos" id="O00268">
    <property type="development level" value="Tbio"/>
</dbReference>
<dbReference type="PRO" id="PR:O00268"/>
<dbReference type="Proteomes" id="UP000005640">
    <property type="component" value="Chromosome 20"/>
</dbReference>
<dbReference type="RNAct" id="O00268">
    <property type="molecule type" value="protein"/>
</dbReference>
<dbReference type="Bgee" id="ENSG00000130699">
    <property type="expression patterns" value="Expressed in right testis and 101 other cell types or tissues"/>
</dbReference>
<dbReference type="ExpressionAtlas" id="O00268">
    <property type="expression patterns" value="baseline and differential"/>
</dbReference>
<dbReference type="GO" id="GO:0000785">
    <property type="term" value="C:chromatin"/>
    <property type="evidence" value="ECO:0000314"/>
    <property type="project" value="ARUK-UCL"/>
</dbReference>
<dbReference type="GO" id="GO:0005829">
    <property type="term" value="C:cytosol"/>
    <property type="evidence" value="ECO:0000314"/>
    <property type="project" value="HPA"/>
</dbReference>
<dbReference type="GO" id="GO:0001673">
    <property type="term" value="C:male germ cell nucleus"/>
    <property type="evidence" value="ECO:0007669"/>
    <property type="project" value="Ensembl"/>
</dbReference>
<dbReference type="GO" id="GO:0071339">
    <property type="term" value="C:MLL1 complex"/>
    <property type="evidence" value="ECO:0000314"/>
    <property type="project" value="UniProtKB"/>
</dbReference>
<dbReference type="GO" id="GO:0005654">
    <property type="term" value="C:nucleoplasm"/>
    <property type="evidence" value="ECO:0000314"/>
    <property type="project" value="HPA"/>
</dbReference>
<dbReference type="GO" id="GO:0005634">
    <property type="term" value="C:nucleus"/>
    <property type="evidence" value="ECO:0000269"/>
    <property type="project" value="ComplexPortal"/>
</dbReference>
<dbReference type="GO" id="GO:0032991">
    <property type="term" value="C:protein-containing complex"/>
    <property type="evidence" value="ECO:0000315"/>
    <property type="project" value="CAFA"/>
</dbReference>
<dbReference type="GO" id="GO:0005669">
    <property type="term" value="C:transcription factor TFIID complex"/>
    <property type="evidence" value="ECO:0000314"/>
    <property type="project" value="MGI"/>
</dbReference>
<dbReference type="GO" id="GO:0033276">
    <property type="term" value="C:transcription factor TFTC complex"/>
    <property type="evidence" value="ECO:0000314"/>
    <property type="project" value="UniProtKB"/>
</dbReference>
<dbReference type="GO" id="GO:0017162">
    <property type="term" value="F:aryl hydrocarbon receptor binding"/>
    <property type="evidence" value="ECO:0000353"/>
    <property type="project" value="CAFA"/>
</dbReference>
<dbReference type="GO" id="GO:0003677">
    <property type="term" value="F:DNA binding"/>
    <property type="evidence" value="ECO:0000318"/>
    <property type="project" value="GO_Central"/>
</dbReference>
<dbReference type="GO" id="GO:0046982">
    <property type="term" value="F:protein heterodimerization activity"/>
    <property type="evidence" value="ECO:0007669"/>
    <property type="project" value="InterPro"/>
</dbReference>
<dbReference type="GO" id="GO:0006352">
    <property type="term" value="P:DNA-templated transcription initiation"/>
    <property type="evidence" value="ECO:0000314"/>
    <property type="project" value="UniProtKB"/>
</dbReference>
<dbReference type="GO" id="GO:0042789">
    <property type="term" value="P:mRNA transcription by RNA polymerase II"/>
    <property type="evidence" value="ECO:0000314"/>
    <property type="project" value="ComplexPortal"/>
</dbReference>
<dbReference type="GO" id="GO:0001541">
    <property type="term" value="P:ovarian follicle development"/>
    <property type="evidence" value="ECO:0007669"/>
    <property type="project" value="Ensembl"/>
</dbReference>
<dbReference type="GO" id="GO:0045893">
    <property type="term" value="P:positive regulation of DNA-templated transcription"/>
    <property type="evidence" value="ECO:0000303"/>
    <property type="project" value="ComplexPortal"/>
</dbReference>
<dbReference type="GO" id="GO:0060261">
    <property type="term" value="P:positive regulation of transcription initiation by RNA polymerase II"/>
    <property type="evidence" value="ECO:0000314"/>
    <property type="project" value="ComplexPortal"/>
</dbReference>
<dbReference type="GO" id="GO:0006282">
    <property type="term" value="P:regulation of DNA repair"/>
    <property type="evidence" value="ECO:0000303"/>
    <property type="project" value="ComplexPortal"/>
</dbReference>
<dbReference type="GO" id="GO:0006357">
    <property type="term" value="P:regulation of transcription by RNA polymerase II"/>
    <property type="evidence" value="ECO:0000314"/>
    <property type="project" value="ComplexPortal"/>
</dbReference>
<dbReference type="GO" id="GO:0051123">
    <property type="term" value="P:RNA polymerase II preinitiation complex assembly"/>
    <property type="evidence" value="ECO:0000353"/>
    <property type="project" value="ComplexPortal"/>
</dbReference>
<dbReference type="GO" id="GO:0006366">
    <property type="term" value="P:transcription by RNA polymerase II"/>
    <property type="evidence" value="ECO:0000304"/>
    <property type="project" value="ProtInc"/>
</dbReference>
<dbReference type="GO" id="GO:0006367">
    <property type="term" value="P:transcription initiation at RNA polymerase II promoter"/>
    <property type="evidence" value="ECO:0000314"/>
    <property type="project" value="UniProtKB"/>
</dbReference>
<dbReference type="CDD" id="cd08045">
    <property type="entry name" value="HFD_TAF4"/>
    <property type="match status" value="1"/>
</dbReference>
<dbReference type="DisProt" id="DP01170"/>
<dbReference type="FunFam" id="1.10.20.10:FF:000015">
    <property type="entry name" value="Transcription initiation factor TFIID subunit 4B"/>
    <property type="match status" value="1"/>
</dbReference>
<dbReference type="FunFam" id="1.20.120.1110:FF:000002">
    <property type="entry name" value="Transcription initiation factor TFIID subunit 4B"/>
    <property type="match status" value="1"/>
</dbReference>
<dbReference type="Gene3D" id="1.10.20.10">
    <property type="entry name" value="Histone, subunit A"/>
    <property type="match status" value="1"/>
</dbReference>
<dbReference type="Gene3D" id="1.20.120.1110">
    <property type="entry name" value="TAFH/NHR1 domain"/>
    <property type="match status" value="1"/>
</dbReference>
<dbReference type="IDEAL" id="IID00231"/>
<dbReference type="InterPro" id="IPR009072">
    <property type="entry name" value="Histone-fold"/>
</dbReference>
<dbReference type="InterPro" id="IPR045144">
    <property type="entry name" value="TAF4"/>
</dbReference>
<dbReference type="InterPro" id="IPR007900">
    <property type="entry name" value="TAF4_C"/>
</dbReference>
<dbReference type="InterPro" id="IPR037249">
    <property type="entry name" value="TAFH/NHR1_dom_sf"/>
</dbReference>
<dbReference type="InterPro" id="IPR003894">
    <property type="entry name" value="TAFH_NHR1"/>
</dbReference>
<dbReference type="PANTHER" id="PTHR15138">
    <property type="entry name" value="TRANSCRIPTION INITIATION FACTOR TFIID SUBUNIT 4"/>
    <property type="match status" value="1"/>
</dbReference>
<dbReference type="PANTHER" id="PTHR15138:SF29">
    <property type="entry name" value="TRANSCRIPTION INITIATION FACTOR TFIID SUBUNIT 4"/>
    <property type="match status" value="1"/>
</dbReference>
<dbReference type="Pfam" id="PF05236">
    <property type="entry name" value="TAF4"/>
    <property type="match status" value="1"/>
</dbReference>
<dbReference type="Pfam" id="PF07531">
    <property type="entry name" value="TAFH"/>
    <property type="match status" value="1"/>
</dbReference>
<dbReference type="SMART" id="SM00549">
    <property type="entry name" value="TAFH"/>
    <property type="match status" value="1"/>
</dbReference>
<dbReference type="SUPFAM" id="SSF47113">
    <property type="entry name" value="Histone-fold"/>
    <property type="match status" value="1"/>
</dbReference>
<dbReference type="SUPFAM" id="SSF158553">
    <property type="entry name" value="TAFH domain-like"/>
    <property type="match status" value="1"/>
</dbReference>
<dbReference type="PROSITE" id="PS51119">
    <property type="entry name" value="TAFH"/>
    <property type="match status" value="1"/>
</dbReference>
<proteinExistence type="evidence at protein level"/>
<evidence type="ECO:0000255" key="1">
    <source>
        <dbReference type="PROSITE-ProRule" id="PRU00440"/>
    </source>
</evidence>
<evidence type="ECO:0000256" key="2">
    <source>
        <dbReference type="SAM" id="MobiDB-lite"/>
    </source>
</evidence>
<evidence type="ECO:0000269" key="3">
    <source>
    </source>
</evidence>
<evidence type="ECO:0000269" key="4">
    <source>
    </source>
</evidence>
<evidence type="ECO:0000269" key="5">
    <source>
    </source>
</evidence>
<evidence type="ECO:0000269" key="6">
    <source>
    </source>
</evidence>
<evidence type="ECO:0000269" key="7">
    <source>
    </source>
</evidence>
<evidence type="ECO:0000269" key="8">
    <source>
    </source>
</evidence>
<evidence type="ECO:0000269" key="9">
    <source>
    </source>
</evidence>
<evidence type="ECO:0000269" key="10">
    <source>
    </source>
</evidence>
<evidence type="ECO:0000269" key="11">
    <source>
    </source>
</evidence>
<evidence type="ECO:0000269" key="12">
    <source>
    </source>
</evidence>
<evidence type="ECO:0000269" key="13">
    <source>
    </source>
</evidence>
<evidence type="ECO:0000305" key="14"/>
<evidence type="ECO:0007744" key="15">
    <source>
        <dbReference type="PDB" id="2P6V"/>
    </source>
</evidence>
<evidence type="ECO:0007744" key="16">
    <source>
        <dbReference type="PDB" id="7EDX"/>
    </source>
</evidence>
<evidence type="ECO:0007744" key="17">
    <source>
        <dbReference type="PDB" id="7EG7"/>
    </source>
</evidence>
<evidence type="ECO:0007744" key="18">
    <source>
        <dbReference type="PDB" id="7EG8"/>
    </source>
</evidence>
<evidence type="ECO:0007744" key="19">
    <source>
        <dbReference type="PDB" id="7EG9"/>
    </source>
</evidence>
<evidence type="ECO:0007744" key="20">
    <source>
        <dbReference type="PDB" id="7EGA"/>
    </source>
</evidence>
<evidence type="ECO:0007744" key="21">
    <source>
        <dbReference type="PDB" id="7EGB"/>
    </source>
</evidence>
<evidence type="ECO:0007744" key="22">
    <source>
        <dbReference type="PDB" id="7EGC"/>
    </source>
</evidence>
<evidence type="ECO:0007744" key="23">
    <source>
        <dbReference type="PDB" id="7EGD"/>
    </source>
</evidence>
<evidence type="ECO:0007744" key="24">
    <source>
        <dbReference type="PDB" id="7EGE"/>
    </source>
</evidence>
<evidence type="ECO:0007744" key="25">
    <source>
        <dbReference type="PDB" id="7EGF"/>
    </source>
</evidence>
<evidence type="ECO:0007744" key="26">
    <source>
    </source>
</evidence>
<evidence type="ECO:0007744" key="27">
    <source>
    </source>
</evidence>
<evidence type="ECO:0007829" key="28">
    <source>
        <dbReference type="PDB" id="1H3O"/>
    </source>
</evidence>
<evidence type="ECO:0007829" key="29">
    <source>
        <dbReference type="PDB" id="2P6V"/>
    </source>
</evidence>
<evidence type="ECO:0007829" key="30">
    <source>
        <dbReference type="PDB" id="7EGF"/>
    </source>
</evidence>
<evidence type="ECO:0007829" key="31">
    <source>
        <dbReference type="PDB" id="7EGG"/>
    </source>
</evidence>
<name>TAF4_HUMAN</name>
<sequence>MAAGSDLLDEVFFNSEVDEKVVSDLVGSLESQLAASAAHHHHLAPRTPEVRAAAAGALGNHVVSGSPAGAAGAGPAAPAEGAPGAAPEPPPAGRARPGGGGPQRPGPPSPRRPLVPAGPAPPAAKLRPPPEGSAGSCAPVPAAAAVAAGPEPAPAGPAKPAGPAALAARAGPGPGPGPGPGPGPGPGKPAGPGAAQTLNGSAALLNSHHAAAPAVSLVNNGPAALLPLPKPAAPGTVIQTPPFVGAAAPPAPAAPSPPAAPAPAAPAAAPPPPPPAPATLARPPGHPAGPPTAAPAVPPPAAAQNGGSAGAAPAPAPAAGGPAGVSGQPGPGAAAAAPAPGVKAESPKRVVQAAPPAAQTLAASGPASTAASMVIGPTMQGALPSPAAVPPPAPGTPTGLPKGAAGAVTQSLSRTPTATTSGIRATLTPTVLAPRLPQPPQNPTNIQNFQLPPGMVLVRSENGQLLMIPQQALAQMQAQAHAQPQTTMAPRPATPTSAPPVQISTVQAPGTPIIARQVTPTTIIKQVSQAQTTVQPSATLQRSPGVQPQLVLGGAAQTASLGTATAVQTGTPQRTVPGATTTSSAATETMENVKKCKNFLSTLIKLASSGKQSTETAANVKELVQNLLDGKIEAEDFTSRLYRELNSSPQPYLVPFLKRSLPALRQLTPDSAAFIQQSQQQPPPPTSQATTALTAVVLSSSVQRTAGKTAATVTSALQPPVLSLTQPTQVGVGKQGQPTPLVIQQPPKPGALIRPPQVTLTQTPMVALRQPHNRIMLTTPQQIQLNPLQPVPVVKPAVLPGTKALSAVSAQAAAAQKNKLKEPGGGSFRDDDDINDVASMAGVNLSEESARILATNSELVGTLTRSCKDETFLLQAPLQRRILEIGKKHGITELHPDVVSYVSHATQQRLQNLVEKISETAQQKNFSYKDDDRYEQASDVRAQLKFFEQLDQIEKQRKDEQEREILMRAAKSRSRQEDPEQLRLKQKAKEMQQQELAQMRQRDANLTALAAIGPRKKRKVDCPGPGSGAEGSGPGSVVPGSSGVGTPRQFTRQRITRVNLRDLIFCLENERETSHSLLLYKAFLK</sequence>
<organism>
    <name type="scientific">Homo sapiens</name>
    <name type="common">Human</name>
    <dbReference type="NCBI Taxonomy" id="9606"/>
    <lineage>
        <taxon>Eukaryota</taxon>
        <taxon>Metazoa</taxon>
        <taxon>Chordata</taxon>
        <taxon>Craniata</taxon>
        <taxon>Vertebrata</taxon>
        <taxon>Euteleostomi</taxon>
        <taxon>Mammalia</taxon>
        <taxon>Eutheria</taxon>
        <taxon>Euarchontoglires</taxon>
        <taxon>Primates</taxon>
        <taxon>Haplorrhini</taxon>
        <taxon>Catarrhini</taxon>
        <taxon>Hominidae</taxon>
        <taxon>Homo</taxon>
    </lineage>
</organism>
<protein>
    <recommendedName>
        <fullName>Transcription initiation factor TFIID subunit 4</fullName>
    </recommendedName>
    <alternativeName>
        <fullName>RNA polymerase II TBP-associated factor subunit C</fullName>
    </alternativeName>
    <alternativeName>
        <fullName>TBP-associated factor 4</fullName>
    </alternativeName>
    <alternativeName>
        <fullName>Transcription initiation factor TFIID 130 kDa subunit</fullName>
        <shortName>TAF(II)130</shortName>
        <shortName>TAFII-130</shortName>
        <shortName>TAFII130</shortName>
    </alternativeName>
    <alternativeName>
        <fullName>Transcription initiation factor TFIID 135 kDa subunit</fullName>
        <shortName>TAF(II)135</shortName>
        <shortName>TAFII-135</shortName>
        <shortName>TAFII135</shortName>
    </alternativeName>
</protein>
<gene>
    <name type="primary">TAF4</name>
    <name type="synonym">TAF2C</name>
    <name type="synonym">TAF2C1</name>
    <name type="synonym">TAF4A</name>
    <name type="synonym">TAFII130</name>
    <name type="synonym">TAFII135</name>
</gene>